<accession>P0DKI1</accession>
<accession>O49369</accession>
<accession>Q9LXC4</accession>
<comment type="function">
    <text evidence="1">Membrane-anchoring subunit of succinate dehydrogenase (SDH).</text>
</comment>
<comment type="cofactor">
    <cofactor evidence="1">
        <name>heme</name>
        <dbReference type="ChEBI" id="CHEBI:30413"/>
    </cofactor>
</comment>
<comment type="pathway">
    <text evidence="6">Carbohydrate metabolism; tricarboxylic acid cycle.</text>
</comment>
<comment type="subunit">
    <text evidence="5">Component of complex II composed of eight subunits in plants: four classical SDH subunits SDH1, SDH2, SDH3 and SDH4 (a flavoprotein (FP), an iron-sulfur protein (IP), and a cytochrome b composed of a large and a small subunit.), as well as four subunits unknown in mitochondria from bacteria and heterotrophic eukaryotes.</text>
</comment>
<comment type="subcellular location">
    <subcellularLocation>
        <location evidence="6">Mitochondrion inner membrane</location>
        <topology evidence="2">Single-pass membrane protein</topology>
    </subcellularLocation>
</comment>
<comment type="tissue specificity">
    <text evidence="3">Expressed in flowers, inflorescences and stems.</text>
</comment>
<comment type="sequence caution" evidence="6">
    <conflict type="erroneous gene model prediction">
        <sequence resource="EMBL-CDS" id="CAA16969"/>
    </conflict>
</comment>
<comment type="sequence caution" evidence="6">
    <conflict type="erroneous gene model prediction">
        <sequence resource="EMBL-CDS" id="CAB79939"/>
    </conflict>
</comment>
<evidence type="ECO:0000250" key="1">
    <source>
        <dbReference type="UniProtKB" id="P69054"/>
    </source>
</evidence>
<evidence type="ECO:0000255" key="2"/>
<evidence type="ECO:0000269" key="3">
    <source>
    </source>
</evidence>
<evidence type="ECO:0000269" key="4">
    <source>
    </source>
</evidence>
<evidence type="ECO:0000269" key="5">
    <source>
    </source>
</evidence>
<evidence type="ECO:0000305" key="6"/>
<evidence type="ECO:0000312" key="7">
    <source>
        <dbReference type="Araport" id="AT4G32210"/>
    </source>
</evidence>
<evidence type="ECO:0000312" key="8">
    <source>
        <dbReference type="EMBL" id="CAA16969.1"/>
    </source>
</evidence>
<dbReference type="EMBL" id="BK000035">
    <property type="protein sequence ID" value="DAA00015.1"/>
    <property type="molecule type" value="Genomic_DNA"/>
</dbReference>
<dbReference type="EMBL" id="AL021811">
    <property type="protein sequence ID" value="CAA16969.1"/>
    <property type="status" value="ALT_SEQ"/>
    <property type="molecule type" value="Genomic_DNA"/>
</dbReference>
<dbReference type="EMBL" id="AL161580">
    <property type="protein sequence ID" value="CAB79939.1"/>
    <property type="status" value="ALT_SEQ"/>
    <property type="molecule type" value="Genomic_DNA"/>
</dbReference>
<dbReference type="EMBL" id="CP002687">
    <property type="protein sequence ID" value="AEE86020.1"/>
    <property type="molecule type" value="Genomic_DNA"/>
</dbReference>
<dbReference type="EMBL" id="AY070732">
    <property type="protein sequence ID" value="AAL50073.1"/>
    <property type="molecule type" value="mRNA"/>
</dbReference>
<dbReference type="PIR" id="T05407">
    <property type="entry name" value="T05407"/>
</dbReference>
<dbReference type="RefSeq" id="NP_194948.2">
    <property type="nucleotide sequence ID" value="NM_119373.3"/>
</dbReference>
<dbReference type="SMR" id="P0DKI1"/>
<dbReference type="FunCoup" id="P0DKI1">
    <property type="interactions" value="276"/>
</dbReference>
<dbReference type="STRING" id="3702.P0DKI1"/>
<dbReference type="EnsemblPlants" id="AT4G32210.1">
    <property type="protein sequence ID" value="AT4G32210.1"/>
    <property type="gene ID" value="AT4G32210"/>
</dbReference>
<dbReference type="EnsemblPlants" id="AT5G09600.1">
    <property type="protein sequence ID" value="AT5G09600.1"/>
    <property type="gene ID" value="AT5G09600"/>
</dbReference>
<dbReference type="EnsemblPlants" id="AT5G09600.3">
    <property type="protein sequence ID" value="AT5G09600.3"/>
    <property type="gene ID" value="AT5G09600"/>
</dbReference>
<dbReference type="GeneID" id="3770570"/>
<dbReference type="Gramene" id="AT4G32210.1">
    <property type="protein sequence ID" value="AT4G32210.1"/>
    <property type="gene ID" value="AT4G32210"/>
</dbReference>
<dbReference type="Gramene" id="AT5G09600.1">
    <property type="protein sequence ID" value="AT5G09600.1"/>
    <property type="gene ID" value="AT5G09600"/>
</dbReference>
<dbReference type="Gramene" id="AT5G09600.3">
    <property type="protein sequence ID" value="AT5G09600.3"/>
    <property type="gene ID" value="AT5G09600"/>
</dbReference>
<dbReference type="KEGG" id="ath:AT4G32210"/>
<dbReference type="KEGG" id="ath:AT5G09600"/>
<dbReference type="Araport" id="AT4G32210"/>
<dbReference type="TAIR" id="AT4G32210">
    <property type="gene designation" value="SDH3-2"/>
</dbReference>
<dbReference type="HOGENOM" id="CLU_112617_0_0_1"/>
<dbReference type="InParanoid" id="P0DKI1"/>
<dbReference type="OMA" id="CAAVMEG"/>
<dbReference type="OrthoDB" id="588261at2759"/>
<dbReference type="PhylomeDB" id="P0DKI1"/>
<dbReference type="UniPathway" id="UPA00223"/>
<dbReference type="PRO" id="PR:P0DKI1"/>
<dbReference type="Proteomes" id="UP000006548">
    <property type="component" value="Chromosome 4"/>
</dbReference>
<dbReference type="ExpressionAtlas" id="P0DKI1">
    <property type="expression patterns" value="baseline and differential"/>
</dbReference>
<dbReference type="GO" id="GO:0005743">
    <property type="term" value="C:mitochondrial inner membrane"/>
    <property type="evidence" value="ECO:0007669"/>
    <property type="project" value="UniProtKB-SubCell"/>
</dbReference>
<dbReference type="GO" id="GO:0045273">
    <property type="term" value="C:respiratory chain complex II (succinate dehydrogenase)"/>
    <property type="evidence" value="ECO:0000314"/>
    <property type="project" value="UniProtKB"/>
</dbReference>
<dbReference type="GO" id="GO:0009055">
    <property type="term" value="F:electron transfer activity"/>
    <property type="evidence" value="ECO:0007669"/>
    <property type="project" value="InterPro"/>
</dbReference>
<dbReference type="GO" id="GO:0046872">
    <property type="term" value="F:metal ion binding"/>
    <property type="evidence" value="ECO:0007669"/>
    <property type="project" value="UniProtKB-KW"/>
</dbReference>
<dbReference type="GO" id="GO:0006099">
    <property type="term" value="P:tricarboxylic acid cycle"/>
    <property type="evidence" value="ECO:0007669"/>
    <property type="project" value="UniProtKB-UniPathway"/>
</dbReference>
<dbReference type="CDD" id="cd03499">
    <property type="entry name" value="SQR_TypeC_SdhC"/>
    <property type="match status" value="1"/>
</dbReference>
<dbReference type="FunFam" id="1.20.1300.10:FF:000014">
    <property type="entry name" value="Succinate dehydrogenase subunit 3-1, mitochondrial"/>
    <property type="match status" value="1"/>
</dbReference>
<dbReference type="Gene3D" id="1.20.1300.10">
    <property type="entry name" value="Fumarate reductase/succinate dehydrogenase, transmembrane subunit"/>
    <property type="match status" value="1"/>
</dbReference>
<dbReference type="InterPro" id="IPR034804">
    <property type="entry name" value="SQR/QFR_C/D"/>
</dbReference>
<dbReference type="InterPro" id="IPR014314">
    <property type="entry name" value="Succ_DH_cytb556"/>
</dbReference>
<dbReference type="InterPro" id="IPR000701">
    <property type="entry name" value="SuccDH_FuR_B_TM-su"/>
</dbReference>
<dbReference type="PANTHER" id="PTHR10978">
    <property type="entry name" value="SUCCINATE DEHYDROGENASE CYTOCHROME B560 SUBUNIT"/>
    <property type="match status" value="1"/>
</dbReference>
<dbReference type="PANTHER" id="PTHR10978:SF5">
    <property type="entry name" value="SUCCINATE DEHYDROGENASE CYTOCHROME B560 SUBUNIT, MITOCHONDRIAL"/>
    <property type="match status" value="1"/>
</dbReference>
<dbReference type="Pfam" id="PF01127">
    <property type="entry name" value="Sdh_cyt"/>
    <property type="match status" value="1"/>
</dbReference>
<dbReference type="SUPFAM" id="SSF81343">
    <property type="entry name" value="Fumarate reductase respiratory complex transmembrane subunits"/>
    <property type="match status" value="1"/>
</dbReference>
<feature type="transit peptide" description="Mitochondrion" evidence="4">
    <location>
        <begin position="1"/>
        <end position="105"/>
    </location>
</feature>
<feature type="chain" id="PRO_0000431746" description="Succinate dehydrogenase subunit 3-2, mitochondrial" evidence="4">
    <location>
        <begin position="106"/>
        <end position="213"/>
    </location>
</feature>
<feature type="transmembrane region" description="Helical" evidence="2">
    <location>
        <begin position="148"/>
        <end position="165"/>
    </location>
</feature>
<feature type="binding site" description="axial binding residue" evidence="1">
    <location>
        <position position="130"/>
    </location>
    <ligand>
        <name>heme</name>
        <dbReference type="ChEBI" id="CHEBI:30413"/>
        <note>ligand shared with second transmembrane subunit</note>
    </ligand>
    <ligandPart>
        <name>Fe</name>
        <dbReference type="ChEBI" id="CHEBI:18248"/>
    </ligandPart>
</feature>
<sequence length="213" mass="23454">MAATALFRSIRRRDVVSAPLSVYKSLAGNAQPSWGSSYIGQNYASFSRAFGSKPVVNDILGTGLGTNNAIREEREKSKSTEAAIVGAQLTRSFRALDVGTSKRLFSTISGDIKTTQEEPKIKSFRPLSPHLSVYQPQMNSMLSIFNRISGVYLTGVTFAGYLLYLKMGMICLTYPSFYQVLYHTQQQLPVITSVTALAAIYHTIKSTHSLLTH</sequence>
<gene>
    <name evidence="6" type="primary">SDH3-2</name>
    <name evidence="7" type="ordered locus">At4g32210</name>
    <name evidence="8" type="ORF">F10M6.150</name>
</gene>
<protein>
    <recommendedName>
        <fullName evidence="6">Succinate dehydrogenase subunit 3-2, mitochondrial</fullName>
    </recommendedName>
</protein>
<keyword id="KW-0903">Direct protein sequencing</keyword>
<keyword id="KW-0249">Electron transport</keyword>
<keyword id="KW-0349">Heme</keyword>
<keyword id="KW-0408">Iron</keyword>
<keyword id="KW-0472">Membrane</keyword>
<keyword id="KW-0479">Metal-binding</keyword>
<keyword id="KW-0496">Mitochondrion</keyword>
<keyword id="KW-0999">Mitochondrion inner membrane</keyword>
<keyword id="KW-1185">Reference proteome</keyword>
<keyword id="KW-0809">Transit peptide</keyword>
<keyword id="KW-0812">Transmembrane</keyword>
<keyword id="KW-1133">Transmembrane helix</keyword>
<keyword id="KW-0813">Transport</keyword>
<keyword id="KW-0816">Tricarboxylic acid cycle</keyword>
<reference key="1">
    <citation type="journal article" date="2001" name="Genetics">
        <title>Multiple losses and transfers to the nucleus of two mitochondrial succinate dehydrogenase genes during angiosperm evolution.</title>
        <authorList>
            <person name="Adams K.L."/>
            <person name="Rosenblueth M."/>
            <person name="Qiu Y.L."/>
            <person name="Palmer J.D."/>
        </authorList>
    </citation>
    <scope>NUCLEOTIDE SEQUENCE [GENOMIC DNA]</scope>
</reference>
<reference key="2">
    <citation type="journal article" date="1999" name="Nature">
        <title>Sequence and analysis of chromosome 4 of the plant Arabidopsis thaliana.</title>
        <authorList>
            <person name="Mayer K.F.X."/>
            <person name="Schueller C."/>
            <person name="Wambutt R."/>
            <person name="Murphy G."/>
            <person name="Volckaert G."/>
            <person name="Pohl T."/>
            <person name="Duesterhoeft A."/>
            <person name="Stiekema W."/>
            <person name="Entian K.-D."/>
            <person name="Terryn N."/>
            <person name="Harris B."/>
            <person name="Ansorge W."/>
            <person name="Brandt P."/>
            <person name="Grivell L.A."/>
            <person name="Rieger M."/>
            <person name="Weichselgartner M."/>
            <person name="de Simone V."/>
            <person name="Obermaier B."/>
            <person name="Mache R."/>
            <person name="Mueller M."/>
            <person name="Kreis M."/>
            <person name="Delseny M."/>
            <person name="Puigdomenech P."/>
            <person name="Watson M."/>
            <person name="Schmidtheini T."/>
            <person name="Reichert B."/>
            <person name="Portetelle D."/>
            <person name="Perez-Alonso M."/>
            <person name="Boutry M."/>
            <person name="Bancroft I."/>
            <person name="Vos P."/>
            <person name="Hoheisel J."/>
            <person name="Zimmermann W."/>
            <person name="Wedler H."/>
            <person name="Ridley P."/>
            <person name="Langham S.-A."/>
            <person name="McCullagh B."/>
            <person name="Bilham L."/>
            <person name="Robben J."/>
            <person name="van der Schueren J."/>
            <person name="Grymonprez B."/>
            <person name="Chuang Y.-J."/>
            <person name="Vandenbussche F."/>
            <person name="Braeken M."/>
            <person name="Weltjens I."/>
            <person name="Voet M."/>
            <person name="Bastiaens I."/>
            <person name="Aert R."/>
            <person name="Defoor E."/>
            <person name="Weitzenegger T."/>
            <person name="Bothe G."/>
            <person name="Ramsperger U."/>
            <person name="Hilbert H."/>
            <person name="Braun M."/>
            <person name="Holzer E."/>
            <person name="Brandt A."/>
            <person name="Peters S."/>
            <person name="van Staveren M."/>
            <person name="Dirkse W."/>
            <person name="Mooijman P."/>
            <person name="Klein Lankhorst R."/>
            <person name="Rose M."/>
            <person name="Hauf J."/>
            <person name="Koetter P."/>
            <person name="Berneiser S."/>
            <person name="Hempel S."/>
            <person name="Feldpausch M."/>
            <person name="Lamberth S."/>
            <person name="Van den Daele H."/>
            <person name="De Keyser A."/>
            <person name="Buysshaert C."/>
            <person name="Gielen J."/>
            <person name="Villarroel R."/>
            <person name="De Clercq R."/>
            <person name="van Montagu M."/>
            <person name="Rogers J."/>
            <person name="Cronin A."/>
            <person name="Quail M.A."/>
            <person name="Bray-Allen S."/>
            <person name="Clark L."/>
            <person name="Doggett J."/>
            <person name="Hall S."/>
            <person name="Kay M."/>
            <person name="Lennard N."/>
            <person name="McLay K."/>
            <person name="Mayes R."/>
            <person name="Pettett A."/>
            <person name="Rajandream M.A."/>
            <person name="Lyne M."/>
            <person name="Benes V."/>
            <person name="Rechmann S."/>
            <person name="Borkova D."/>
            <person name="Bloecker H."/>
            <person name="Scharfe M."/>
            <person name="Grimm M."/>
            <person name="Loehnert T.-H."/>
            <person name="Dose S."/>
            <person name="de Haan M."/>
            <person name="Maarse A.C."/>
            <person name="Schaefer M."/>
            <person name="Mueller-Auer S."/>
            <person name="Gabel C."/>
            <person name="Fuchs M."/>
            <person name="Fartmann B."/>
            <person name="Granderath K."/>
            <person name="Dauner D."/>
            <person name="Herzl A."/>
            <person name="Neumann S."/>
            <person name="Argiriou A."/>
            <person name="Vitale D."/>
            <person name="Liguori R."/>
            <person name="Piravandi E."/>
            <person name="Massenet O."/>
            <person name="Quigley F."/>
            <person name="Clabauld G."/>
            <person name="Muendlein A."/>
            <person name="Felber R."/>
            <person name="Schnabl S."/>
            <person name="Hiller R."/>
            <person name="Schmidt W."/>
            <person name="Lecharny A."/>
            <person name="Aubourg S."/>
            <person name="Chefdor F."/>
            <person name="Cooke R."/>
            <person name="Berger C."/>
            <person name="Monfort A."/>
            <person name="Casacuberta E."/>
            <person name="Gibbons T."/>
            <person name="Weber N."/>
            <person name="Vandenbol M."/>
            <person name="Bargues M."/>
            <person name="Terol J."/>
            <person name="Torres A."/>
            <person name="Perez-Perez A."/>
            <person name="Purnelle B."/>
            <person name="Bent E."/>
            <person name="Johnson S."/>
            <person name="Tacon D."/>
            <person name="Jesse T."/>
            <person name="Heijnen L."/>
            <person name="Schwarz S."/>
            <person name="Scholler P."/>
            <person name="Heber S."/>
            <person name="Francs P."/>
            <person name="Bielke C."/>
            <person name="Frishman D."/>
            <person name="Haase D."/>
            <person name="Lemcke K."/>
            <person name="Mewes H.-W."/>
            <person name="Stocker S."/>
            <person name="Zaccaria P."/>
            <person name="Bevan M."/>
            <person name="Wilson R.K."/>
            <person name="de la Bastide M."/>
            <person name="Habermann K."/>
            <person name="Parnell L."/>
            <person name="Dedhia N."/>
            <person name="Gnoj L."/>
            <person name="Schutz K."/>
            <person name="Huang E."/>
            <person name="Spiegel L."/>
            <person name="Sekhon M."/>
            <person name="Murray J."/>
            <person name="Sheet P."/>
            <person name="Cordes M."/>
            <person name="Abu-Threideh J."/>
            <person name="Stoneking T."/>
            <person name="Kalicki J."/>
            <person name="Graves T."/>
            <person name="Harmon G."/>
            <person name="Edwards J."/>
            <person name="Latreille P."/>
            <person name="Courtney L."/>
            <person name="Cloud J."/>
            <person name="Abbott A."/>
            <person name="Scott K."/>
            <person name="Johnson D."/>
            <person name="Minx P."/>
            <person name="Bentley D."/>
            <person name="Fulton B."/>
            <person name="Miller N."/>
            <person name="Greco T."/>
            <person name="Kemp K."/>
            <person name="Kramer J."/>
            <person name="Fulton L."/>
            <person name="Mardis E."/>
            <person name="Dante M."/>
            <person name="Pepin K."/>
            <person name="Hillier L.W."/>
            <person name="Nelson J."/>
            <person name="Spieth J."/>
            <person name="Ryan E."/>
            <person name="Andrews S."/>
            <person name="Geisel C."/>
            <person name="Layman D."/>
            <person name="Du H."/>
            <person name="Ali J."/>
            <person name="Berghoff A."/>
            <person name="Jones K."/>
            <person name="Drone K."/>
            <person name="Cotton M."/>
            <person name="Joshu C."/>
            <person name="Antonoiu B."/>
            <person name="Zidanic M."/>
            <person name="Strong C."/>
            <person name="Sun H."/>
            <person name="Lamar B."/>
            <person name="Yordan C."/>
            <person name="Ma P."/>
            <person name="Zhong J."/>
            <person name="Preston R."/>
            <person name="Vil D."/>
            <person name="Shekher M."/>
            <person name="Matero A."/>
            <person name="Shah R."/>
            <person name="Swaby I.K."/>
            <person name="O'Shaughnessy A."/>
            <person name="Rodriguez M."/>
            <person name="Hoffman J."/>
            <person name="Till S."/>
            <person name="Granat S."/>
            <person name="Shohdy N."/>
            <person name="Hasegawa A."/>
            <person name="Hameed A."/>
            <person name="Lodhi M."/>
            <person name="Johnson A."/>
            <person name="Chen E."/>
            <person name="Marra M.A."/>
            <person name="Martienssen R."/>
            <person name="McCombie W.R."/>
        </authorList>
    </citation>
    <scope>NUCLEOTIDE SEQUENCE [LARGE SCALE GENOMIC DNA]</scope>
    <source>
        <strain>cv. Columbia</strain>
    </source>
</reference>
<reference key="3">
    <citation type="journal article" date="2017" name="Plant J.">
        <title>Araport11: a complete reannotation of the Arabidopsis thaliana reference genome.</title>
        <authorList>
            <person name="Cheng C.Y."/>
            <person name="Krishnakumar V."/>
            <person name="Chan A.P."/>
            <person name="Thibaud-Nissen F."/>
            <person name="Schobel S."/>
            <person name="Town C.D."/>
        </authorList>
    </citation>
    <scope>GENOME REANNOTATION</scope>
    <source>
        <strain>cv. Columbia</strain>
    </source>
</reference>
<reference key="4">
    <citation type="journal article" date="2003" name="Science">
        <title>Empirical analysis of transcriptional activity in the Arabidopsis genome.</title>
        <authorList>
            <person name="Yamada K."/>
            <person name="Lim J."/>
            <person name="Dale J.M."/>
            <person name="Chen H."/>
            <person name="Shinn P."/>
            <person name="Palm C.J."/>
            <person name="Southwick A.M."/>
            <person name="Wu H.C."/>
            <person name="Kim C.J."/>
            <person name="Nguyen M."/>
            <person name="Pham P.K."/>
            <person name="Cheuk R.F."/>
            <person name="Karlin-Newmann G."/>
            <person name="Liu S.X."/>
            <person name="Lam B."/>
            <person name="Sakano H."/>
            <person name="Wu T."/>
            <person name="Yu G."/>
            <person name="Miranda M."/>
            <person name="Quach H.L."/>
            <person name="Tripp M."/>
            <person name="Chang C.H."/>
            <person name="Lee J.M."/>
            <person name="Toriumi M.J."/>
            <person name="Chan M.M."/>
            <person name="Tang C.C."/>
            <person name="Onodera C.S."/>
            <person name="Deng J.M."/>
            <person name="Akiyama K."/>
            <person name="Ansari Y."/>
            <person name="Arakawa T."/>
            <person name="Banh J."/>
            <person name="Banno F."/>
            <person name="Bowser L."/>
            <person name="Brooks S.Y."/>
            <person name="Carninci P."/>
            <person name="Chao Q."/>
            <person name="Choy N."/>
            <person name="Enju A."/>
            <person name="Goldsmith A.D."/>
            <person name="Gurjal M."/>
            <person name="Hansen N.F."/>
            <person name="Hayashizaki Y."/>
            <person name="Johnson-Hopson C."/>
            <person name="Hsuan V.W."/>
            <person name="Iida K."/>
            <person name="Karnes M."/>
            <person name="Khan S."/>
            <person name="Koesema E."/>
            <person name="Ishida J."/>
            <person name="Jiang P.X."/>
            <person name="Jones T."/>
            <person name="Kawai J."/>
            <person name="Kamiya A."/>
            <person name="Meyers C."/>
            <person name="Nakajima M."/>
            <person name="Narusaka M."/>
            <person name="Seki M."/>
            <person name="Sakurai T."/>
            <person name="Satou M."/>
            <person name="Tamse R."/>
            <person name="Vaysberg M."/>
            <person name="Wallender E.K."/>
            <person name="Wong C."/>
            <person name="Yamamura Y."/>
            <person name="Yuan S."/>
            <person name="Shinozaki K."/>
            <person name="Davis R.W."/>
            <person name="Theologis A."/>
            <person name="Ecker J.R."/>
        </authorList>
    </citation>
    <scope>NUCLEOTIDE SEQUENCE [LARGE SCALE MRNA]</scope>
    <source>
        <strain>cv. Columbia</strain>
    </source>
</reference>
<reference key="5">
    <citation type="journal article" date="2002" name="Plant Mol. Biol.">
        <title>The four subunits of mitochondrial respiratory complex II are encoded by multiple nuclear genes and targeted to mitochondria in Arabidopsis thaliana.</title>
        <authorList>
            <person name="Figueroa P."/>
            <person name="Leon G."/>
            <person name="Elorza A."/>
            <person name="Holuigue L."/>
            <person name="Araya A."/>
            <person name="Jordana X."/>
        </authorList>
    </citation>
    <scope>TISSUE SPECIFICITY</scope>
</reference>
<reference key="6">
    <citation type="journal article" date="2003" name="Plant Physiol.">
        <title>New insights into the respiratory chain of plant mitochondria. Supercomplexes and a unique composition of complex II.</title>
        <authorList>
            <person name="Eubel H."/>
            <person name="Jansch L."/>
            <person name="Braun H.P."/>
        </authorList>
    </citation>
    <scope>PROTEIN SEQUENCE OF 106-119</scope>
    <scope>IDENTIFICATION BY MASS SPECTROMETRY</scope>
</reference>
<reference key="7">
    <citation type="journal article" date="2004" name="Plant Mol. Biol.">
        <title>Mitochondrial cytochrome c oxidase and succinate dehydrogenase complexes contain plant specific subunits.</title>
        <authorList>
            <person name="Millar A.H."/>
            <person name="Eubel H."/>
            <person name="Jansch L."/>
            <person name="Kruft V."/>
            <person name="Heazlewood J.L."/>
            <person name="Braun H.P."/>
        </authorList>
    </citation>
    <scope>IDENTIFICATION BY MASS SPECTROMETRY</scope>
    <scope>SUBUNIT</scope>
</reference>
<organism>
    <name type="scientific">Arabidopsis thaliana</name>
    <name type="common">Mouse-ear cress</name>
    <dbReference type="NCBI Taxonomy" id="3702"/>
    <lineage>
        <taxon>Eukaryota</taxon>
        <taxon>Viridiplantae</taxon>
        <taxon>Streptophyta</taxon>
        <taxon>Embryophyta</taxon>
        <taxon>Tracheophyta</taxon>
        <taxon>Spermatophyta</taxon>
        <taxon>Magnoliopsida</taxon>
        <taxon>eudicotyledons</taxon>
        <taxon>Gunneridae</taxon>
        <taxon>Pentapetalae</taxon>
        <taxon>rosids</taxon>
        <taxon>malvids</taxon>
        <taxon>Brassicales</taxon>
        <taxon>Brassicaceae</taxon>
        <taxon>Camelineae</taxon>
        <taxon>Arabidopsis</taxon>
    </lineage>
</organism>
<name>SDH32_ARATH</name>
<proteinExistence type="evidence at protein level"/>